<reference key="1">
    <citation type="journal article" date="2006" name="Nat. Genet.">
        <title>The multidrug-resistant human pathogen Clostridium difficile has a highly mobile, mosaic genome.</title>
        <authorList>
            <person name="Sebaihia M."/>
            <person name="Wren B.W."/>
            <person name="Mullany P."/>
            <person name="Fairweather N.F."/>
            <person name="Minton N."/>
            <person name="Stabler R."/>
            <person name="Thomson N.R."/>
            <person name="Roberts A.P."/>
            <person name="Cerdeno-Tarraga A.M."/>
            <person name="Wang H."/>
            <person name="Holden M.T.G."/>
            <person name="Wright A."/>
            <person name="Churcher C."/>
            <person name="Quail M.A."/>
            <person name="Baker S."/>
            <person name="Bason N."/>
            <person name="Brooks K."/>
            <person name="Chillingworth T."/>
            <person name="Cronin A."/>
            <person name="Davis P."/>
            <person name="Dowd L."/>
            <person name="Fraser A."/>
            <person name="Feltwell T."/>
            <person name="Hance Z."/>
            <person name="Holroyd S."/>
            <person name="Jagels K."/>
            <person name="Moule S."/>
            <person name="Mungall K."/>
            <person name="Price C."/>
            <person name="Rabbinowitsch E."/>
            <person name="Sharp S."/>
            <person name="Simmonds M."/>
            <person name="Stevens K."/>
            <person name="Unwin L."/>
            <person name="Whithead S."/>
            <person name="Dupuy B."/>
            <person name="Dougan G."/>
            <person name="Barrell B."/>
            <person name="Parkhill J."/>
        </authorList>
    </citation>
    <scope>NUCLEOTIDE SEQUENCE [LARGE SCALE GENOMIC DNA]</scope>
    <source>
        <strain>630</strain>
    </source>
</reference>
<feature type="chain" id="PRO_0000323110" description="Small ribosomal subunit protein uS5">
    <location>
        <begin position="1"/>
        <end position="169"/>
    </location>
</feature>
<feature type="domain" description="S5 DRBM" evidence="1">
    <location>
        <begin position="14"/>
        <end position="77"/>
    </location>
</feature>
<evidence type="ECO:0000255" key="1">
    <source>
        <dbReference type="HAMAP-Rule" id="MF_01307"/>
    </source>
</evidence>
<evidence type="ECO:0000305" key="2"/>
<sequence length="169" mass="17851">MLRRKPIDAGQLDLQEKVVEVRRVTKVVKGGRNFRFAALVVVGDENGHVGIGAGKAMEVPDAIKKAVEDAKKNLIVVPIVGTTIPHEVRGHFGAGNILIMPAVEGTGVIAGGPARAVLELAGLKDVRAKSLGSNNPRNMVNATIEGLNSLKTVEDIAKLRGKKVEELLG</sequence>
<proteinExistence type="inferred from homology"/>
<protein>
    <recommendedName>
        <fullName evidence="1">Small ribosomal subunit protein uS5</fullName>
    </recommendedName>
    <alternativeName>
        <fullName evidence="2">30S ribosomal protein S5</fullName>
    </alternativeName>
</protein>
<keyword id="KW-1185">Reference proteome</keyword>
<keyword id="KW-0687">Ribonucleoprotein</keyword>
<keyword id="KW-0689">Ribosomal protein</keyword>
<keyword id="KW-0694">RNA-binding</keyword>
<keyword id="KW-0699">rRNA-binding</keyword>
<dbReference type="EMBL" id="AM180355">
    <property type="protein sequence ID" value="CAJ66905.1"/>
    <property type="molecule type" value="Genomic_DNA"/>
</dbReference>
<dbReference type="RefSeq" id="WP_003421138.1">
    <property type="nucleotide sequence ID" value="NZ_JAUPES010000043.1"/>
</dbReference>
<dbReference type="RefSeq" id="YP_001086554.1">
    <property type="nucleotide sequence ID" value="NC_009089.1"/>
</dbReference>
<dbReference type="SMR" id="Q18CH3"/>
<dbReference type="STRING" id="272563.CD630_00880"/>
<dbReference type="EnsemblBacteria" id="CAJ66905">
    <property type="protein sequence ID" value="CAJ66905"/>
    <property type="gene ID" value="CD630_00880"/>
</dbReference>
<dbReference type="GeneID" id="66352588"/>
<dbReference type="KEGG" id="cdf:CD630_00880"/>
<dbReference type="KEGG" id="pdc:CDIF630_00156"/>
<dbReference type="PATRIC" id="fig|272563.120.peg.96"/>
<dbReference type="eggNOG" id="COG0098">
    <property type="taxonomic scope" value="Bacteria"/>
</dbReference>
<dbReference type="OrthoDB" id="9809045at2"/>
<dbReference type="PhylomeDB" id="Q18CH3"/>
<dbReference type="BioCyc" id="PDIF272563:G12WB-144-MONOMER"/>
<dbReference type="Proteomes" id="UP000001978">
    <property type="component" value="Chromosome"/>
</dbReference>
<dbReference type="GO" id="GO:0015935">
    <property type="term" value="C:small ribosomal subunit"/>
    <property type="evidence" value="ECO:0007669"/>
    <property type="project" value="InterPro"/>
</dbReference>
<dbReference type="GO" id="GO:0019843">
    <property type="term" value="F:rRNA binding"/>
    <property type="evidence" value="ECO:0007669"/>
    <property type="project" value="UniProtKB-UniRule"/>
</dbReference>
<dbReference type="GO" id="GO:0003735">
    <property type="term" value="F:structural constituent of ribosome"/>
    <property type="evidence" value="ECO:0007669"/>
    <property type="project" value="InterPro"/>
</dbReference>
<dbReference type="GO" id="GO:0006412">
    <property type="term" value="P:translation"/>
    <property type="evidence" value="ECO:0007669"/>
    <property type="project" value="UniProtKB-UniRule"/>
</dbReference>
<dbReference type="FunFam" id="3.30.160.20:FF:000001">
    <property type="entry name" value="30S ribosomal protein S5"/>
    <property type="match status" value="1"/>
</dbReference>
<dbReference type="FunFam" id="3.30.230.10:FF:000002">
    <property type="entry name" value="30S ribosomal protein S5"/>
    <property type="match status" value="1"/>
</dbReference>
<dbReference type="Gene3D" id="3.30.160.20">
    <property type="match status" value="1"/>
</dbReference>
<dbReference type="Gene3D" id="3.30.230.10">
    <property type="match status" value="1"/>
</dbReference>
<dbReference type="HAMAP" id="MF_01307_B">
    <property type="entry name" value="Ribosomal_uS5_B"/>
    <property type="match status" value="1"/>
</dbReference>
<dbReference type="InterPro" id="IPR020568">
    <property type="entry name" value="Ribosomal_Su5_D2-typ_SF"/>
</dbReference>
<dbReference type="InterPro" id="IPR000851">
    <property type="entry name" value="Ribosomal_uS5"/>
</dbReference>
<dbReference type="InterPro" id="IPR005712">
    <property type="entry name" value="Ribosomal_uS5_bac-type"/>
</dbReference>
<dbReference type="InterPro" id="IPR005324">
    <property type="entry name" value="Ribosomal_uS5_C"/>
</dbReference>
<dbReference type="InterPro" id="IPR013810">
    <property type="entry name" value="Ribosomal_uS5_N"/>
</dbReference>
<dbReference type="InterPro" id="IPR018192">
    <property type="entry name" value="Ribosomal_uS5_N_CS"/>
</dbReference>
<dbReference type="InterPro" id="IPR014721">
    <property type="entry name" value="Ribsml_uS5_D2-typ_fold_subgr"/>
</dbReference>
<dbReference type="NCBIfam" id="TIGR01021">
    <property type="entry name" value="rpsE_bact"/>
    <property type="match status" value="1"/>
</dbReference>
<dbReference type="PANTHER" id="PTHR48277">
    <property type="entry name" value="MITOCHONDRIAL RIBOSOMAL PROTEIN S5"/>
    <property type="match status" value="1"/>
</dbReference>
<dbReference type="PANTHER" id="PTHR48277:SF1">
    <property type="entry name" value="MITOCHONDRIAL RIBOSOMAL PROTEIN S5"/>
    <property type="match status" value="1"/>
</dbReference>
<dbReference type="Pfam" id="PF00333">
    <property type="entry name" value="Ribosomal_S5"/>
    <property type="match status" value="1"/>
</dbReference>
<dbReference type="Pfam" id="PF03719">
    <property type="entry name" value="Ribosomal_S5_C"/>
    <property type="match status" value="1"/>
</dbReference>
<dbReference type="SUPFAM" id="SSF54768">
    <property type="entry name" value="dsRNA-binding domain-like"/>
    <property type="match status" value="1"/>
</dbReference>
<dbReference type="SUPFAM" id="SSF54211">
    <property type="entry name" value="Ribosomal protein S5 domain 2-like"/>
    <property type="match status" value="1"/>
</dbReference>
<dbReference type="PROSITE" id="PS00585">
    <property type="entry name" value="RIBOSOMAL_S5"/>
    <property type="match status" value="1"/>
</dbReference>
<dbReference type="PROSITE" id="PS50881">
    <property type="entry name" value="S5_DSRBD"/>
    <property type="match status" value="1"/>
</dbReference>
<accession>Q18CH3</accession>
<gene>
    <name evidence="1" type="primary">rpsE</name>
    <name type="ordered locus">CD630_00880</name>
</gene>
<organism>
    <name type="scientific">Clostridioides difficile (strain 630)</name>
    <name type="common">Peptoclostridium difficile</name>
    <dbReference type="NCBI Taxonomy" id="272563"/>
    <lineage>
        <taxon>Bacteria</taxon>
        <taxon>Bacillati</taxon>
        <taxon>Bacillota</taxon>
        <taxon>Clostridia</taxon>
        <taxon>Peptostreptococcales</taxon>
        <taxon>Peptostreptococcaceae</taxon>
        <taxon>Clostridioides</taxon>
    </lineage>
</organism>
<comment type="function">
    <text evidence="1">With S4 and S12 plays an important role in translational accuracy.</text>
</comment>
<comment type="function">
    <text evidence="1">Located at the back of the 30S subunit body where it stabilizes the conformation of the head with respect to the body.</text>
</comment>
<comment type="subunit">
    <text evidence="1">Part of the 30S ribosomal subunit. Contacts proteins S4 and S8.</text>
</comment>
<comment type="domain">
    <text>The N-terminal domain interacts with the head of the 30S subunit; the C-terminal domain interacts with the body and contacts protein S4. The interaction surface between S4 and S5 is involved in control of translational fidelity.</text>
</comment>
<comment type="similarity">
    <text evidence="1">Belongs to the universal ribosomal protein uS5 family.</text>
</comment>
<name>RS5_CLOD6</name>